<reference key="1">
    <citation type="journal article" date="1999" name="Nature">
        <title>Genomic sequence comparison of two unrelated isolates of the human gastric pathogen Helicobacter pylori.</title>
        <authorList>
            <person name="Alm R.A."/>
            <person name="Ling L.-S.L."/>
            <person name="Moir D.T."/>
            <person name="King B.L."/>
            <person name="Brown E.D."/>
            <person name="Doig P.C."/>
            <person name="Smith D.R."/>
            <person name="Noonan B."/>
            <person name="Guild B.C."/>
            <person name="deJonge B.L."/>
            <person name="Carmel G."/>
            <person name="Tummino P.J."/>
            <person name="Caruso A."/>
            <person name="Uria-Nickelsen M."/>
            <person name="Mills D.M."/>
            <person name="Ives C."/>
            <person name="Gibson R."/>
            <person name="Merberg D."/>
            <person name="Mills S.D."/>
            <person name="Jiang Q."/>
            <person name="Taylor D.E."/>
            <person name="Vovis G.F."/>
            <person name="Trust T.J."/>
        </authorList>
    </citation>
    <scope>NUCLEOTIDE SEQUENCE [LARGE SCALE GENOMIC DNA]</scope>
    <source>
        <strain>J99 / ATCC 700824</strain>
    </source>
</reference>
<dbReference type="EC" id="2.7.2.3"/>
<dbReference type="EMBL" id="AE001439">
    <property type="protein sequence ID" value="AAD06837.1"/>
    <property type="molecule type" value="Genomic_DNA"/>
</dbReference>
<dbReference type="PIR" id="B71830">
    <property type="entry name" value="B71830"/>
</dbReference>
<dbReference type="RefSeq" id="WP_000879971.1">
    <property type="nucleotide sequence ID" value="NZ_CP011330.1"/>
</dbReference>
<dbReference type="SMR" id="Q9ZJP1"/>
<dbReference type="KEGG" id="hpj:jhp_1264"/>
<dbReference type="PATRIC" id="fig|85963.30.peg.1307"/>
<dbReference type="eggNOG" id="COG0126">
    <property type="taxonomic scope" value="Bacteria"/>
</dbReference>
<dbReference type="UniPathway" id="UPA00109">
    <property type="reaction ID" value="UER00185"/>
</dbReference>
<dbReference type="Proteomes" id="UP000000804">
    <property type="component" value="Chromosome"/>
</dbReference>
<dbReference type="GO" id="GO:0005829">
    <property type="term" value="C:cytosol"/>
    <property type="evidence" value="ECO:0007669"/>
    <property type="project" value="TreeGrafter"/>
</dbReference>
<dbReference type="GO" id="GO:0043531">
    <property type="term" value="F:ADP binding"/>
    <property type="evidence" value="ECO:0007669"/>
    <property type="project" value="TreeGrafter"/>
</dbReference>
<dbReference type="GO" id="GO:0005524">
    <property type="term" value="F:ATP binding"/>
    <property type="evidence" value="ECO:0007669"/>
    <property type="project" value="UniProtKB-KW"/>
</dbReference>
<dbReference type="GO" id="GO:0004618">
    <property type="term" value="F:phosphoglycerate kinase activity"/>
    <property type="evidence" value="ECO:0007669"/>
    <property type="project" value="UniProtKB-UniRule"/>
</dbReference>
<dbReference type="GO" id="GO:0006094">
    <property type="term" value="P:gluconeogenesis"/>
    <property type="evidence" value="ECO:0007669"/>
    <property type="project" value="TreeGrafter"/>
</dbReference>
<dbReference type="GO" id="GO:0006096">
    <property type="term" value="P:glycolytic process"/>
    <property type="evidence" value="ECO:0007669"/>
    <property type="project" value="UniProtKB-UniRule"/>
</dbReference>
<dbReference type="FunFam" id="3.40.50.1260:FF:000011">
    <property type="entry name" value="Phosphoglycerate kinase"/>
    <property type="match status" value="1"/>
</dbReference>
<dbReference type="FunFam" id="3.40.50.1260:FF:000012">
    <property type="entry name" value="Phosphoglycerate kinase"/>
    <property type="match status" value="1"/>
</dbReference>
<dbReference type="Gene3D" id="3.40.50.1260">
    <property type="entry name" value="Phosphoglycerate kinase, N-terminal domain"/>
    <property type="match status" value="2"/>
</dbReference>
<dbReference type="HAMAP" id="MF_00145">
    <property type="entry name" value="Phosphoglyc_kinase"/>
    <property type="match status" value="1"/>
</dbReference>
<dbReference type="InterPro" id="IPR001576">
    <property type="entry name" value="Phosphoglycerate_kinase"/>
</dbReference>
<dbReference type="InterPro" id="IPR015911">
    <property type="entry name" value="Phosphoglycerate_kinase_CS"/>
</dbReference>
<dbReference type="InterPro" id="IPR015824">
    <property type="entry name" value="Phosphoglycerate_kinase_N"/>
</dbReference>
<dbReference type="InterPro" id="IPR036043">
    <property type="entry name" value="Phosphoglycerate_kinase_sf"/>
</dbReference>
<dbReference type="PANTHER" id="PTHR11406">
    <property type="entry name" value="PHOSPHOGLYCERATE KINASE"/>
    <property type="match status" value="1"/>
</dbReference>
<dbReference type="PANTHER" id="PTHR11406:SF23">
    <property type="entry name" value="PHOSPHOGLYCERATE KINASE 1, CHLOROPLASTIC-RELATED"/>
    <property type="match status" value="1"/>
</dbReference>
<dbReference type="Pfam" id="PF00162">
    <property type="entry name" value="PGK"/>
    <property type="match status" value="1"/>
</dbReference>
<dbReference type="PIRSF" id="PIRSF000724">
    <property type="entry name" value="Pgk"/>
    <property type="match status" value="1"/>
</dbReference>
<dbReference type="PRINTS" id="PR00477">
    <property type="entry name" value="PHGLYCKINASE"/>
</dbReference>
<dbReference type="SUPFAM" id="SSF53748">
    <property type="entry name" value="Phosphoglycerate kinase"/>
    <property type="match status" value="1"/>
</dbReference>
<dbReference type="PROSITE" id="PS00111">
    <property type="entry name" value="PGLYCERATE_KINASE"/>
    <property type="match status" value="1"/>
</dbReference>
<sequence>MLAKMSFMQNVKNIQEVDVNHKRVLIRVDFNVPLDENLNITDDTRIRESLPTIQFCIDNKAKDIILVSHLGRPKGVEEKLSLKPFLKRLERLLNHEVVFSQNIAQLKQALNENAPTRIFLLENIRFLKGEEENDENLAKDLASLCDVFVNDAFGTSHRKHASTYGTAKFAPIKVSGFLLKKEIDSFYQAFNHPLRPLLLIVGGAKVSSKLTLLKNILDLIDKLIIAGAMSNTFLKALGYDVQDSSVEDALINDALELLQSAKEKKVKVYLPIDAVTTDDILNPKHIKISPVQDIEPKHKIADIGPASLKLFSEVIESAPTILWNGPLGVHEKQEFARGTTFLAHKIANTYAFSLIGGGDTIDAINRAGEKDNMSFISTGGGASLELLEGKILPCFEVLDKRH</sequence>
<evidence type="ECO:0000250" key="1"/>
<evidence type="ECO:0000305" key="2"/>
<comment type="catalytic activity">
    <reaction>
        <text>(2R)-3-phosphoglycerate + ATP = (2R)-3-phospho-glyceroyl phosphate + ADP</text>
        <dbReference type="Rhea" id="RHEA:14801"/>
        <dbReference type="ChEBI" id="CHEBI:30616"/>
        <dbReference type="ChEBI" id="CHEBI:57604"/>
        <dbReference type="ChEBI" id="CHEBI:58272"/>
        <dbReference type="ChEBI" id="CHEBI:456216"/>
        <dbReference type="EC" id="2.7.2.3"/>
    </reaction>
</comment>
<comment type="pathway">
    <text>Carbohydrate degradation; glycolysis; pyruvate from D-glyceraldehyde 3-phosphate: step 2/5.</text>
</comment>
<comment type="subcellular location">
    <subcellularLocation>
        <location evidence="2">Cytoplasm</location>
    </subcellularLocation>
</comment>
<comment type="similarity">
    <text evidence="2">Belongs to the phosphoglycerate kinase family.</text>
</comment>
<name>PGK_HELPJ</name>
<proteinExistence type="inferred from homology"/>
<protein>
    <recommendedName>
        <fullName>Phosphoglycerate kinase</fullName>
        <ecNumber>2.7.2.3</ecNumber>
    </recommendedName>
</protein>
<gene>
    <name type="primary">pgk</name>
    <name type="ordered locus">jhp_1264</name>
</gene>
<keyword id="KW-0067">ATP-binding</keyword>
<keyword id="KW-0963">Cytoplasm</keyword>
<keyword id="KW-0324">Glycolysis</keyword>
<keyword id="KW-0418">Kinase</keyword>
<keyword id="KW-0547">Nucleotide-binding</keyword>
<keyword id="KW-0808">Transferase</keyword>
<organism>
    <name type="scientific">Helicobacter pylori (strain J99 / ATCC 700824)</name>
    <name type="common">Campylobacter pylori J99</name>
    <dbReference type="NCBI Taxonomy" id="85963"/>
    <lineage>
        <taxon>Bacteria</taxon>
        <taxon>Pseudomonadati</taxon>
        <taxon>Campylobacterota</taxon>
        <taxon>Epsilonproteobacteria</taxon>
        <taxon>Campylobacterales</taxon>
        <taxon>Helicobacteraceae</taxon>
        <taxon>Helicobacter</taxon>
    </lineage>
</organism>
<feature type="chain" id="PRO_0000145951" description="Phosphoglycerate kinase">
    <location>
        <begin position="1"/>
        <end position="402"/>
    </location>
</feature>
<feature type="binding site" evidence="1">
    <location>
        <begin position="29"/>
        <end position="31"/>
    </location>
    <ligand>
        <name>substrate</name>
    </ligand>
</feature>
<feature type="binding site" evidence="1">
    <location>
        <position position="45"/>
    </location>
    <ligand>
        <name>substrate</name>
    </ligand>
</feature>
<feature type="binding site" evidence="1">
    <location>
        <begin position="69"/>
        <end position="72"/>
    </location>
    <ligand>
        <name>substrate</name>
    </ligand>
</feature>
<feature type="binding site" evidence="1">
    <location>
        <position position="125"/>
    </location>
    <ligand>
        <name>substrate</name>
    </ligand>
</feature>
<feature type="binding site" evidence="1">
    <location>
        <position position="158"/>
    </location>
    <ligand>
        <name>substrate</name>
    </ligand>
</feature>
<feature type="binding site" evidence="1">
    <location>
        <position position="209"/>
    </location>
    <ligand>
        <name>ATP</name>
        <dbReference type="ChEBI" id="CHEBI:30616"/>
    </ligand>
</feature>
<feature type="binding site" evidence="1">
    <location>
        <position position="331"/>
    </location>
    <ligand>
        <name>ATP</name>
        <dbReference type="ChEBI" id="CHEBI:30616"/>
    </ligand>
</feature>
<feature type="binding site" evidence="1">
    <location>
        <begin position="357"/>
        <end position="360"/>
    </location>
    <ligand>
        <name>ATP</name>
        <dbReference type="ChEBI" id="CHEBI:30616"/>
    </ligand>
</feature>
<accession>Q9ZJP1</accession>